<organism>
    <name type="scientific">Oryza sativa subsp. indica</name>
    <name type="common">Rice</name>
    <dbReference type="NCBI Taxonomy" id="39946"/>
    <lineage>
        <taxon>Eukaryota</taxon>
        <taxon>Viridiplantae</taxon>
        <taxon>Streptophyta</taxon>
        <taxon>Embryophyta</taxon>
        <taxon>Tracheophyta</taxon>
        <taxon>Spermatophyta</taxon>
        <taxon>Magnoliopsida</taxon>
        <taxon>Liliopsida</taxon>
        <taxon>Poales</taxon>
        <taxon>Poaceae</taxon>
        <taxon>BOP clade</taxon>
        <taxon>Oryzoideae</taxon>
        <taxon>Oryzeae</taxon>
        <taxon>Oryzinae</taxon>
        <taxon>Oryza</taxon>
        <taxon>Oryza sativa</taxon>
    </lineage>
</organism>
<reference key="1">
    <citation type="journal article" date="2002" name="Nature">
        <title>Sequence and analysis of rice chromosome 4.</title>
        <authorList>
            <person name="Feng Q."/>
            <person name="Zhang Y."/>
            <person name="Hao P."/>
            <person name="Wang S."/>
            <person name="Fu G."/>
            <person name="Huang Y."/>
            <person name="Li Y."/>
            <person name="Zhu J."/>
            <person name="Liu Y."/>
            <person name="Hu X."/>
            <person name="Jia P."/>
            <person name="Zhang Y."/>
            <person name="Zhao Q."/>
            <person name="Ying K."/>
            <person name="Yu S."/>
            <person name="Tang Y."/>
            <person name="Weng Q."/>
            <person name="Zhang L."/>
            <person name="Lu Y."/>
            <person name="Mu J."/>
            <person name="Lu Y."/>
            <person name="Zhang L.S."/>
            <person name="Yu Z."/>
            <person name="Fan D."/>
            <person name="Liu X."/>
            <person name="Lu T."/>
            <person name="Li C."/>
            <person name="Wu Y."/>
            <person name="Sun T."/>
            <person name="Lei H."/>
            <person name="Li T."/>
            <person name="Hu H."/>
            <person name="Guan J."/>
            <person name="Wu M."/>
            <person name="Zhang R."/>
            <person name="Zhou B."/>
            <person name="Chen Z."/>
            <person name="Chen L."/>
            <person name="Jin Z."/>
            <person name="Wang R."/>
            <person name="Yin H."/>
            <person name="Cai Z."/>
            <person name="Ren S."/>
            <person name="Lv G."/>
            <person name="Gu W."/>
            <person name="Zhu G."/>
            <person name="Tu Y."/>
            <person name="Jia J."/>
            <person name="Zhang Y."/>
            <person name="Chen J."/>
            <person name="Kang H."/>
            <person name="Chen X."/>
            <person name="Shao C."/>
            <person name="Sun Y."/>
            <person name="Hu Q."/>
            <person name="Zhang X."/>
            <person name="Zhang W."/>
            <person name="Wang L."/>
            <person name="Ding C."/>
            <person name="Sheng H."/>
            <person name="Gu J."/>
            <person name="Chen S."/>
            <person name="Ni L."/>
            <person name="Zhu F."/>
            <person name="Chen W."/>
            <person name="Lan L."/>
            <person name="Lai Y."/>
            <person name="Cheng Z."/>
            <person name="Gu M."/>
            <person name="Jiang J."/>
            <person name="Li J."/>
            <person name="Hong G."/>
            <person name="Xue Y."/>
            <person name="Han B."/>
        </authorList>
    </citation>
    <scope>NUCLEOTIDE SEQUENCE [LARGE SCALE GENOMIC DNA]</scope>
    <source>
        <strain>cv. Guang-Lu-Ai No.4</strain>
    </source>
</reference>
<reference key="2">
    <citation type="journal article" date="2005" name="PLoS Biol.">
        <title>The genomes of Oryza sativa: a history of duplications.</title>
        <authorList>
            <person name="Yu J."/>
            <person name="Wang J."/>
            <person name="Lin W."/>
            <person name="Li S."/>
            <person name="Li H."/>
            <person name="Zhou J."/>
            <person name="Ni P."/>
            <person name="Dong W."/>
            <person name="Hu S."/>
            <person name="Zeng C."/>
            <person name="Zhang J."/>
            <person name="Zhang Y."/>
            <person name="Li R."/>
            <person name="Xu Z."/>
            <person name="Li S."/>
            <person name="Li X."/>
            <person name="Zheng H."/>
            <person name="Cong L."/>
            <person name="Lin L."/>
            <person name="Yin J."/>
            <person name="Geng J."/>
            <person name="Li G."/>
            <person name="Shi J."/>
            <person name="Liu J."/>
            <person name="Lv H."/>
            <person name="Li J."/>
            <person name="Wang J."/>
            <person name="Deng Y."/>
            <person name="Ran L."/>
            <person name="Shi X."/>
            <person name="Wang X."/>
            <person name="Wu Q."/>
            <person name="Li C."/>
            <person name="Ren X."/>
            <person name="Wang J."/>
            <person name="Wang X."/>
            <person name="Li D."/>
            <person name="Liu D."/>
            <person name="Zhang X."/>
            <person name="Ji Z."/>
            <person name="Zhao W."/>
            <person name="Sun Y."/>
            <person name="Zhang Z."/>
            <person name="Bao J."/>
            <person name="Han Y."/>
            <person name="Dong L."/>
            <person name="Ji J."/>
            <person name="Chen P."/>
            <person name="Wu S."/>
            <person name="Liu J."/>
            <person name="Xiao Y."/>
            <person name="Bu D."/>
            <person name="Tan J."/>
            <person name="Yang L."/>
            <person name="Ye C."/>
            <person name="Zhang J."/>
            <person name="Xu J."/>
            <person name="Zhou Y."/>
            <person name="Yu Y."/>
            <person name="Zhang B."/>
            <person name="Zhuang S."/>
            <person name="Wei H."/>
            <person name="Liu B."/>
            <person name="Lei M."/>
            <person name="Yu H."/>
            <person name="Li Y."/>
            <person name="Xu H."/>
            <person name="Wei S."/>
            <person name="He X."/>
            <person name="Fang L."/>
            <person name="Zhang Z."/>
            <person name="Zhang Y."/>
            <person name="Huang X."/>
            <person name="Su Z."/>
            <person name="Tong W."/>
            <person name="Li J."/>
            <person name="Tong Z."/>
            <person name="Li S."/>
            <person name="Ye J."/>
            <person name="Wang L."/>
            <person name="Fang L."/>
            <person name="Lei T."/>
            <person name="Chen C.-S."/>
            <person name="Chen H.-C."/>
            <person name="Xu Z."/>
            <person name="Li H."/>
            <person name="Huang H."/>
            <person name="Zhang F."/>
            <person name="Xu H."/>
            <person name="Li N."/>
            <person name="Zhao C."/>
            <person name="Li S."/>
            <person name="Dong L."/>
            <person name="Huang Y."/>
            <person name="Li L."/>
            <person name="Xi Y."/>
            <person name="Qi Q."/>
            <person name="Li W."/>
            <person name="Zhang B."/>
            <person name="Hu W."/>
            <person name="Zhang Y."/>
            <person name="Tian X."/>
            <person name="Jiao Y."/>
            <person name="Liang X."/>
            <person name="Jin J."/>
            <person name="Gao L."/>
            <person name="Zheng W."/>
            <person name="Hao B."/>
            <person name="Liu S.-M."/>
            <person name="Wang W."/>
            <person name="Yuan L."/>
            <person name="Cao M."/>
            <person name="McDermott J."/>
            <person name="Samudrala R."/>
            <person name="Wang J."/>
            <person name="Wong G.K.-S."/>
            <person name="Yang H."/>
        </authorList>
    </citation>
    <scope>NUCLEOTIDE SEQUENCE [LARGE SCALE GENOMIC DNA]</scope>
    <source>
        <strain>cv. 93-11</strain>
    </source>
</reference>
<reference key="3">
    <citation type="journal article" date="2010" name="Plant Signal. Behav.">
        <title>Genome-wide analysis of the family of light-harvesting chlorophyll a/b-binding proteins in Arabidopsis and rice.</title>
        <authorList>
            <person name="Umate P."/>
        </authorList>
    </citation>
    <scope>REVIEW</scope>
</reference>
<reference key="4">
    <citation type="journal article" date="2011" name="Proc. Natl. Acad. Sci. U.S.A.">
        <title>Molecular distinction in genetic regulation of nonphotochemical quenching in rice.</title>
        <authorList>
            <person name="Kasajima I."/>
            <person name="Ebana K."/>
            <person name="Yamamoto T."/>
            <person name="Takahara K."/>
            <person name="Yano M."/>
            <person name="Kawai-Yamada M."/>
            <person name="Uchimiya H."/>
        </authorList>
    </citation>
    <scope>GENE FAMILY</scope>
    <scope>NOMENCLATURE</scope>
</reference>
<reference key="5">
    <citation type="journal article" date="2014" name="Plant Physiol. Biochem.">
        <title>Light energy allocation at PSII under field light conditions: how much energy is lost in NPQ-associated dissipation?</title>
        <authorList>
            <person name="Endo T."/>
            <person name="Uebayashi N."/>
            <person name="Ishida S."/>
            <person name="Ikeuchi M."/>
            <person name="Sato F."/>
        </authorList>
    </citation>
    <scope>REVIEW</scope>
</reference>
<dbReference type="EMBL" id="AL732342">
    <property type="protein sequence ID" value="CAH68096.1"/>
    <property type="status" value="ALT_INIT"/>
    <property type="molecule type" value="Genomic_DNA"/>
</dbReference>
<dbReference type="EMBL" id="CT827954">
    <property type="protein sequence ID" value="CAJ86355.1"/>
    <property type="status" value="ALT_INIT"/>
    <property type="molecule type" value="Genomic_DNA"/>
</dbReference>
<dbReference type="EMBL" id="CM000129">
    <property type="protein sequence ID" value="EAY96154.1"/>
    <property type="status" value="ALT_INIT"/>
    <property type="molecule type" value="Genomic_DNA"/>
</dbReference>
<dbReference type="SMR" id="A2XZ94"/>
<dbReference type="STRING" id="39946.A2XZ94"/>
<dbReference type="EnsemblPlants" id="OsGoSa_04g0031540.01">
    <property type="protein sequence ID" value="OsGoSa_04g0031540.01"/>
    <property type="gene ID" value="OsGoSa_04g0031540"/>
</dbReference>
<dbReference type="EnsemblPlants" id="OsIR64_04g0031120.01">
    <property type="protein sequence ID" value="OsIR64_04g0031120.01"/>
    <property type="gene ID" value="OsIR64_04g0031120"/>
</dbReference>
<dbReference type="EnsemblPlants" id="OsLaMu_04g0032070.01">
    <property type="protein sequence ID" value="OsLaMu_04g0032070.01"/>
    <property type="gene ID" value="OsLaMu_04g0032070"/>
</dbReference>
<dbReference type="EnsemblPlants" id="OsLima_04g0031590.01">
    <property type="protein sequence ID" value="OsLima_04g0031590.01"/>
    <property type="gene ID" value="OsLima_04g0031590"/>
</dbReference>
<dbReference type="EnsemblPlants" id="OsLiXu_04g0032120.01">
    <property type="protein sequence ID" value="OsLiXu_04g0032120.01"/>
    <property type="gene ID" value="OsLiXu_04g0032120"/>
</dbReference>
<dbReference type="EnsemblPlants" id="OsMH63_04G032480_01">
    <property type="protein sequence ID" value="OsMH63_04G032480_01"/>
    <property type="gene ID" value="OsMH63_04G032480"/>
</dbReference>
<dbReference type="EnsemblPlants" id="OsPr106_04g0032510.01">
    <property type="protein sequence ID" value="OsPr106_04g0032510.01"/>
    <property type="gene ID" value="OsPr106_04g0032510"/>
</dbReference>
<dbReference type="EnsemblPlants" id="OsZS97_04G032620_01">
    <property type="protein sequence ID" value="OsZS97_04G032620_01"/>
    <property type="gene ID" value="OsZS97_04G032620"/>
</dbReference>
<dbReference type="Gramene" id="OsGoSa_04g0031540.01">
    <property type="protein sequence ID" value="OsGoSa_04g0031540.01"/>
    <property type="gene ID" value="OsGoSa_04g0031540"/>
</dbReference>
<dbReference type="Gramene" id="OsIR64_04g0031120.01">
    <property type="protein sequence ID" value="OsIR64_04g0031120.01"/>
    <property type="gene ID" value="OsIR64_04g0031120"/>
</dbReference>
<dbReference type="Gramene" id="OsLaMu_04g0032070.01">
    <property type="protein sequence ID" value="OsLaMu_04g0032070.01"/>
    <property type="gene ID" value="OsLaMu_04g0032070"/>
</dbReference>
<dbReference type="Gramene" id="OsLima_04g0031590.01">
    <property type="protein sequence ID" value="OsLima_04g0031590.01"/>
    <property type="gene ID" value="OsLima_04g0031590"/>
</dbReference>
<dbReference type="Gramene" id="OsLiXu_04g0032120.01">
    <property type="protein sequence ID" value="OsLiXu_04g0032120.01"/>
    <property type="gene ID" value="OsLiXu_04g0032120"/>
</dbReference>
<dbReference type="Gramene" id="OsMH63_04G032480_01">
    <property type="protein sequence ID" value="OsMH63_04G032480_01"/>
    <property type="gene ID" value="OsMH63_04G032480"/>
</dbReference>
<dbReference type="Gramene" id="OsPr106_04g0032510.01">
    <property type="protein sequence ID" value="OsPr106_04g0032510.01"/>
    <property type="gene ID" value="OsPr106_04g0032510"/>
</dbReference>
<dbReference type="Gramene" id="OsZS97_04G032620_01">
    <property type="protein sequence ID" value="OsZS97_04G032620_01"/>
    <property type="gene ID" value="OsZS97_04G032620"/>
</dbReference>
<dbReference type="HOGENOM" id="CLU_090803_0_0_1"/>
<dbReference type="OrthoDB" id="48883at2759"/>
<dbReference type="Proteomes" id="UP000007015">
    <property type="component" value="Chromosome 4"/>
</dbReference>
<dbReference type="GO" id="GO:0009535">
    <property type="term" value="C:chloroplast thylakoid membrane"/>
    <property type="evidence" value="ECO:0007669"/>
    <property type="project" value="UniProtKB-SubCell"/>
</dbReference>
<dbReference type="GO" id="GO:0009523">
    <property type="term" value="C:photosystem II"/>
    <property type="evidence" value="ECO:0007669"/>
    <property type="project" value="UniProtKB-KW"/>
</dbReference>
<dbReference type="GO" id="GO:0015979">
    <property type="term" value="P:photosynthesis"/>
    <property type="evidence" value="ECO:0007669"/>
    <property type="project" value="UniProtKB-KW"/>
</dbReference>
<dbReference type="FunFam" id="1.10.3460.10:FF:000008">
    <property type="entry name" value="Photosystem II 22 kDa protein, chloroplastic"/>
    <property type="match status" value="2"/>
</dbReference>
<dbReference type="Gene3D" id="1.10.3460.10">
    <property type="entry name" value="Chlorophyll a/b binding protein domain"/>
    <property type="match status" value="2"/>
</dbReference>
<dbReference type="InterPro" id="IPR022796">
    <property type="entry name" value="Chloroa_b-bind"/>
</dbReference>
<dbReference type="PANTHER" id="PTHR14154">
    <property type="entry name" value="UPF0041 BRAIN PROTEIN 44-RELATED"/>
    <property type="match status" value="1"/>
</dbReference>
<dbReference type="Pfam" id="PF00504">
    <property type="entry name" value="Chloroa_b-bind"/>
    <property type="match status" value="1"/>
</dbReference>
<dbReference type="SUPFAM" id="SSF103511">
    <property type="entry name" value="Chlorophyll a-b binding protein"/>
    <property type="match status" value="1"/>
</dbReference>
<evidence type="ECO:0000250" key="1">
    <source>
        <dbReference type="UniProtKB" id="Q0J8R9"/>
    </source>
</evidence>
<evidence type="ECO:0000250" key="2">
    <source>
        <dbReference type="UniProtKB" id="Q9XF91"/>
    </source>
</evidence>
<evidence type="ECO:0000255" key="3"/>
<evidence type="ECO:0000303" key="4">
    <source>
    </source>
</evidence>
<evidence type="ECO:0000305" key="5"/>
<evidence type="ECO:0000312" key="6">
    <source>
        <dbReference type="EMBL" id="CAH68096.1"/>
    </source>
</evidence>
<evidence type="ECO:0000312" key="7">
    <source>
        <dbReference type="EMBL" id="CAJ86355.1"/>
    </source>
</evidence>
<evidence type="ECO:0000312" key="8">
    <source>
        <dbReference type="EMBL" id="EAY96154.1"/>
    </source>
</evidence>
<comment type="function">
    <text evidence="1">Involved in high light-mediated energy-dependent nonphotochemical quenching (NPQ, qE) and thermal dissipation (TD) thus regulating energy conversion in photosystem II and protecting from photoinhibition (By similarity). Also seems to regulate quantum yield of electron transport in fluctuating light conditions (By similarity).</text>
</comment>
<comment type="subcellular location">
    <subcellularLocation>
        <location evidence="2">Plastid</location>
        <location evidence="2">Chloroplast thylakoid membrane</location>
        <topology evidence="3">Multi-pass membrane protein</topology>
    </subcellularLocation>
</comment>
<comment type="similarity">
    <text evidence="5">Belongs to the ELIP/psbS family.</text>
</comment>
<comment type="sequence caution" evidence="5">
    <conflict type="erroneous initiation">
        <sequence resource="EMBL-CDS" id="CAH68096"/>
    </conflict>
    <text>Truncated N-terminus.</text>
</comment>
<comment type="sequence caution" evidence="5">
    <conflict type="erroneous initiation">
        <sequence resource="EMBL-CDS" id="CAJ86355"/>
    </conflict>
    <text>Truncated N-terminus.</text>
</comment>
<comment type="sequence caution" evidence="5">
    <conflict type="erroneous initiation">
        <sequence resource="EMBL-CDS" id="EAY96154"/>
    </conflict>
    <text>Truncated N-terminus.</text>
</comment>
<proteinExistence type="inferred from homology"/>
<name>PSBS2_ORYSI</name>
<sequence>MALQQSMAMPMMVVSGLGTAPRSSPMVQLQRMKKHLVVVAAFKSRTKASPKVDKSNKNKSIVEDGIFGTSGGIGFTKENELFVGRVAMLGFAASLLGEAVTGKGILAQLNLETGIPIYEAEPLLLFFILFTLLGAIGALGDRGRFVDDATGLERAVIPPGKGFRAALGLSEGGPLFGFTKANELFVGRLAQLGIAFSLIGEIITGKGALAQLNIETGVPINEIEPLLLFNILFFFFAAINPGTGKFVTDDNDDQ</sequence>
<protein>
    <recommendedName>
        <fullName evidence="5">Photosystem II 22 kDa protein 2, chloroplastic</fullName>
        <shortName evidence="5">22 kDa protein of photosystem II 2</shortName>
    </recommendedName>
    <alternativeName>
        <fullName evidence="4">Photosystem II subunit 2</fullName>
        <shortName evidence="4">OsPsbS2</shortName>
    </alternativeName>
</protein>
<accession>A2XZ94</accession>
<accession>Q259V3</accession>
<gene>
    <name evidence="4" type="primary">PSBS2</name>
    <name evidence="5" type="synonym">PSII-S</name>
    <name evidence="6" type="ORF">B0518A01.1</name>
    <name evidence="7" type="ORF">H0814G11.22</name>
    <name evidence="8" type="ORF">OsI_18034</name>
</gene>
<feature type="transit peptide" description="Chloroplast" evidence="3">
    <location>
        <begin position="1"/>
        <end position="38"/>
    </location>
</feature>
<feature type="chain" id="PRO_0000447495" description="Photosystem II 22 kDa protein 2, chloroplastic" evidence="3">
    <location>
        <begin position="39"/>
        <end position="254"/>
    </location>
</feature>
<feature type="transmembrane region" description="Helical" evidence="3">
    <location>
        <begin position="86"/>
        <end position="106"/>
    </location>
</feature>
<feature type="transmembrane region" description="Helical" evidence="3">
    <location>
        <begin position="120"/>
        <end position="140"/>
    </location>
</feature>
<feature type="transmembrane region" description="Helical" evidence="3">
    <location>
        <begin position="184"/>
        <end position="204"/>
    </location>
</feature>
<feature type="transmembrane region" description="Helical" evidence="3">
    <location>
        <begin position="219"/>
        <end position="239"/>
    </location>
</feature>
<feature type="repeat" description="1" evidence="5">
    <location>
        <begin position="42"/>
        <end position="148"/>
    </location>
</feature>
<feature type="repeat" description="2" evidence="5">
    <location>
        <begin position="149"/>
        <end position="253"/>
    </location>
</feature>
<keyword id="KW-0150">Chloroplast</keyword>
<keyword id="KW-0472">Membrane</keyword>
<keyword id="KW-0602">Photosynthesis</keyword>
<keyword id="KW-0604">Photosystem II</keyword>
<keyword id="KW-0934">Plastid</keyword>
<keyword id="KW-1185">Reference proteome</keyword>
<keyword id="KW-0677">Repeat</keyword>
<keyword id="KW-0793">Thylakoid</keyword>
<keyword id="KW-0809">Transit peptide</keyword>
<keyword id="KW-0812">Transmembrane</keyword>
<keyword id="KW-1133">Transmembrane helix</keyword>